<keyword id="KW-1185">Reference proteome</keyword>
<keyword id="KW-0687">Ribonucleoprotein</keyword>
<keyword id="KW-0689">Ribosomal protein</keyword>
<keyword id="KW-0694">RNA-binding</keyword>
<keyword id="KW-0699">rRNA-binding</keyword>
<reference key="1">
    <citation type="journal article" date="2009" name="PLoS Genet.">
        <title>Organised genome dynamics in the Escherichia coli species results in highly diverse adaptive paths.</title>
        <authorList>
            <person name="Touchon M."/>
            <person name="Hoede C."/>
            <person name="Tenaillon O."/>
            <person name="Barbe V."/>
            <person name="Baeriswyl S."/>
            <person name="Bidet P."/>
            <person name="Bingen E."/>
            <person name="Bonacorsi S."/>
            <person name="Bouchier C."/>
            <person name="Bouvet O."/>
            <person name="Calteau A."/>
            <person name="Chiapello H."/>
            <person name="Clermont O."/>
            <person name="Cruveiller S."/>
            <person name="Danchin A."/>
            <person name="Diard M."/>
            <person name="Dossat C."/>
            <person name="Karoui M.E."/>
            <person name="Frapy E."/>
            <person name="Garry L."/>
            <person name="Ghigo J.M."/>
            <person name="Gilles A.M."/>
            <person name="Johnson J."/>
            <person name="Le Bouguenec C."/>
            <person name="Lescat M."/>
            <person name="Mangenot S."/>
            <person name="Martinez-Jehanne V."/>
            <person name="Matic I."/>
            <person name="Nassif X."/>
            <person name="Oztas S."/>
            <person name="Petit M.A."/>
            <person name="Pichon C."/>
            <person name="Rouy Z."/>
            <person name="Ruf C.S."/>
            <person name="Schneider D."/>
            <person name="Tourret J."/>
            <person name="Vacherie B."/>
            <person name="Vallenet D."/>
            <person name="Medigue C."/>
            <person name="Rocha E.P.C."/>
            <person name="Denamur E."/>
        </authorList>
    </citation>
    <scope>NUCLEOTIDE SEQUENCE [LARGE SCALE GENOMIC DNA]</scope>
    <source>
        <strain>55989 / EAEC</strain>
    </source>
</reference>
<dbReference type="EMBL" id="CU928145">
    <property type="protein sequence ID" value="CAU95909.1"/>
    <property type="molecule type" value="Genomic_DNA"/>
</dbReference>
<dbReference type="RefSeq" id="WP_001274021.1">
    <property type="nucleotide sequence ID" value="NZ_CP028304.1"/>
</dbReference>
<dbReference type="SMR" id="B7L4E5"/>
<dbReference type="GeneID" id="93777413"/>
<dbReference type="KEGG" id="eck:EC55989_0022"/>
<dbReference type="HOGENOM" id="CLU_160655_4_0_6"/>
<dbReference type="Proteomes" id="UP000000746">
    <property type="component" value="Chromosome"/>
</dbReference>
<dbReference type="GO" id="GO:0005829">
    <property type="term" value="C:cytosol"/>
    <property type="evidence" value="ECO:0007669"/>
    <property type="project" value="TreeGrafter"/>
</dbReference>
<dbReference type="GO" id="GO:0015935">
    <property type="term" value="C:small ribosomal subunit"/>
    <property type="evidence" value="ECO:0007669"/>
    <property type="project" value="TreeGrafter"/>
</dbReference>
<dbReference type="GO" id="GO:0070181">
    <property type="term" value="F:small ribosomal subunit rRNA binding"/>
    <property type="evidence" value="ECO:0007669"/>
    <property type="project" value="TreeGrafter"/>
</dbReference>
<dbReference type="GO" id="GO:0003735">
    <property type="term" value="F:structural constituent of ribosome"/>
    <property type="evidence" value="ECO:0007669"/>
    <property type="project" value="InterPro"/>
</dbReference>
<dbReference type="GO" id="GO:0006412">
    <property type="term" value="P:translation"/>
    <property type="evidence" value="ECO:0007669"/>
    <property type="project" value="UniProtKB-UniRule"/>
</dbReference>
<dbReference type="FunFam" id="1.20.58.110:FF:000001">
    <property type="entry name" value="30S ribosomal protein S20"/>
    <property type="match status" value="1"/>
</dbReference>
<dbReference type="Gene3D" id="1.20.58.110">
    <property type="entry name" value="Ribosomal protein S20"/>
    <property type="match status" value="1"/>
</dbReference>
<dbReference type="HAMAP" id="MF_00500">
    <property type="entry name" value="Ribosomal_bS20"/>
    <property type="match status" value="1"/>
</dbReference>
<dbReference type="InterPro" id="IPR002583">
    <property type="entry name" value="Ribosomal_bS20"/>
</dbReference>
<dbReference type="InterPro" id="IPR036510">
    <property type="entry name" value="Ribosomal_bS20_sf"/>
</dbReference>
<dbReference type="NCBIfam" id="TIGR00029">
    <property type="entry name" value="S20"/>
    <property type="match status" value="1"/>
</dbReference>
<dbReference type="PANTHER" id="PTHR33398">
    <property type="entry name" value="30S RIBOSOMAL PROTEIN S20"/>
    <property type="match status" value="1"/>
</dbReference>
<dbReference type="PANTHER" id="PTHR33398:SF1">
    <property type="entry name" value="SMALL RIBOSOMAL SUBUNIT PROTEIN BS20C"/>
    <property type="match status" value="1"/>
</dbReference>
<dbReference type="Pfam" id="PF01649">
    <property type="entry name" value="Ribosomal_S20p"/>
    <property type="match status" value="1"/>
</dbReference>
<dbReference type="SUPFAM" id="SSF46992">
    <property type="entry name" value="Ribosomal protein S20"/>
    <property type="match status" value="1"/>
</dbReference>
<protein>
    <recommendedName>
        <fullName evidence="1">Small ribosomal subunit protein bS20</fullName>
    </recommendedName>
    <alternativeName>
        <fullName evidence="3">30S ribosomal protein S20</fullName>
    </alternativeName>
</protein>
<comment type="function">
    <text evidence="1">Binds directly to 16S ribosomal RNA.</text>
</comment>
<comment type="similarity">
    <text evidence="1">Belongs to the bacterial ribosomal protein bS20 family.</text>
</comment>
<feature type="chain" id="PRO_1000194243" description="Small ribosomal subunit protein bS20">
    <location>
        <begin position="1"/>
        <end position="87"/>
    </location>
</feature>
<feature type="region of interest" description="Disordered" evidence="2">
    <location>
        <begin position="1"/>
        <end position="26"/>
    </location>
</feature>
<accession>B7L4E5</accession>
<name>RS20_ECO55</name>
<sequence>MANIKSAKKRAIQSEKARKHNASRRSMMRTFIKKVYAAIEAGDKAAAQKAFNEMQPIVDRQAAKGLIHKNKAARHKANLTAQINKLA</sequence>
<gene>
    <name evidence="1" type="primary">rpsT</name>
    <name type="ordered locus">EC55989_0022</name>
</gene>
<evidence type="ECO:0000255" key="1">
    <source>
        <dbReference type="HAMAP-Rule" id="MF_00500"/>
    </source>
</evidence>
<evidence type="ECO:0000256" key="2">
    <source>
        <dbReference type="SAM" id="MobiDB-lite"/>
    </source>
</evidence>
<evidence type="ECO:0000305" key="3"/>
<organism>
    <name type="scientific">Escherichia coli (strain 55989 / EAEC)</name>
    <dbReference type="NCBI Taxonomy" id="585055"/>
    <lineage>
        <taxon>Bacteria</taxon>
        <taxon>Pseudomonadati</taxon>
        <taxon>Pseudomonadota</taxon>
        <taxon>Gammaproteobacteria</taxon>
        <taxon>Enterobacterales</taxon>
        <taxon>Enterobacteriaceae</taxon>
        <taxon>Escherichia</taxon>
    </lineage>
</organism>
<proteinExistence type="inferred from homology"/>